<sequence>MEEFQVYLELARSRQHDFLYPLIFREYIYALAYDHGLNSSILVENLGYDNKSSLLIVKRLITRMYQQNHLIISANDSNKKRFWGYNKNLYSQIISEGFAVSVEIPFSLQLISSLEEAKIIKSYNLRSIHSIFPFFEDKFPYLNYVSDVRIPYPIHLEILVQILRYWVKDASSFHLLRLFIYEYYNWNSLITPKKWISTFSKSNPRFFLFLYNFYVCEYESIFLFLRNKSSYLRLTSSGVFFERIYFYAKIEHLVEVFDKDFPSTLWFFKDPFIHYVRYQGKSILASKNTPFFMNKWKYYLIHLWQCNFYVWSQPGKIHINQLSEHSFYFLGYFSNVRLNPSVVRSQMLENSFIIENVMKKLDTIIPIIPLIRSLAKVKFCNGLGHPISKPVWADSSDFDIIDRFLRICRNLSHYYNGSSKKKSLYRIKYILRLSCIKTLARKHKSTVRVFLKRLGSELLEELFTEEEEILSLIFPRASSTLHRLYRGRIWYLDIFYFHQ</sequence>
<protein>
    <recommendedName>
        <fullName evidence="1">Maturase K</fullName>
    </recommendedName>
    <alternativeName>
        <fullName evidence="1">Intron maturase</fullName>
    </alternativeName>
</protein>
<reference key="1">
    <citation type="journal article" date="2004" name="Am. J. Bot.">
        <title>A phylogeny of legumes (Leguminosae) based on analysis of the plastid matK gene resolves many well-supported subclades within the family.</title>
        <authorList>
            <person name="Wojciechowski M.F."/>
            <person name="Lavin M."/>
            <person name="Sanderson M.J."/>
        </authorList>
        <dbReference type="AGRICOLA" id="IND43661289"/>
    </citation>
    <scope>NUCLEOTIDE SEQUENCE [GENOMIC DNA]</scope>
</reference>
<keyword id="KW-0150">Chloroplast</keyword>
<keyword id="KW-0507">mRNA processing</keyword>
<keyword id="KW-0934">Plastid</keyword>
<keyword id="KW-0694">RNA-binding</keyword>
<keyword id="KW-0819">tRNA processing</keyword>
<organism>
    <name type="scientific">Ceratonia siliqua</name>
    <name type="common">Carob</name>
    <name type="synonym">St John's-bread</name>
    <dbReference type="NCBI Taxonomy" id="20340"/>
    <lineage>
        <taxon>Eukaryota</taxon>
        <taxon>Viridiplantae</taxon>
        <taxon>Streptophyta</taxon>
        <taxon>Embryophyta</taxon>
        <taxon>Tracheophyta</taxon>
        <taxon>Spermatophyta</taxon>
        <taxon>Magnoliopsida</taxon>
        <taxon>eudicotyledons</taxon>
        <taxon>Gunneridae</taxon>
        <taxon>Pentapetalae</taxon>
        <taxon>rosids</taxon>
        <taxon>fabids</taxon>
        <taxon>Fabales</taxon>
        <taxon>Fabaceae</taxon>
        <taxon>Ceratonia clade</taxon>
        <taxon>Ceratonia</taxon>
    </lineage>
</organism>
<geneLocation type="chloroplast"/>
<dbReference type="EMBL" id="AY386852">
    <property type="protein sequence ID" value="AAQ91930.1"/>
    <property type="molecule type" value="Genomic_DNA"/>
</dbReference>
<dbReference type="RefSeq" id="YP_009127259.1">
    <property type="nucleotide sequence ID" value="NC_026678.1"/>
</dbReference>
<dbReference type="RefSeq" id="YP_009756093.1">
    <property type="nucleotide sequence ID" value="NC_047061.1"/>
</dbReference>
<dbReference type="GeneID" id="23762929"/>
<dbReference type="GeneID" id="54372107"/>
<dbReference type="GO" id="GO:0009507">
    <property type="term" value="C:chloroplast"/>
    <property type="evidence" value="ECO:0007669"/>
    <property type="project" value="UniProtKB-SubCell"/>
</dbReference>
<dbReference type="GO" id="GO:0003723">
    <property type="term" value="F:RNA binding"/>
    <property type="evidence" value="ECO:0007669"/>
    <property type="project" value="UniProtKB-KW"/>
</dbReference>
<dbReference type="GO" id="GO:0006397">
    <property type="term" value="P:mRNA processing"/>
    <property type="evidence" value="ECO:0007669"/>
    <property type="project" value="UniProtKB-KW"/>
</dbReference>
<dbReference type="GO" id="GO:0008380">
    <property type="term" value="P:RNA splicing"/>
    <property type="evidence" value="ECO:0007669"/>
    <property type="project" value="UniProtKB-UniRule"/>
</dbReference>
<dbReference type="GO" id="GO:0008033">
    <property type="term" value="P:tRNA processing"/>
    <property type="evidence" value="ECO:0007669"/>
    <property type="project" value="UniProtKB-KW"/>
</dbReference>
<dbReference type="HAMAP" id="MF_01390">
    <property type="entry name" value="MatK"/>
    <property type="match status" value="1"/>
</dbReference>
<dbReference type="InterPro" id="IPR024937">
    <property type="entry name" value="Domain_X"/>
</dbReference>
<dbReference type="InterPro" id="IPR002866">
    <property type="entry name" value="Maturase_MatK"/>
</dbReference>
<dbReference type="InterPro" id="IPR024942">
    <property type="entry name" value="Maturase_MatK_N"/>
</dbReference>
<dbReference type="PANTHER" id="PTHR34811">
    <property type="entry name" value="MATURASE K"/>
    <property type="match status" value="1"/>
</dbReference>
<dbReference type="PANTHER" id="PTHR34811:SF1">
    <property type="entry name" value="MATURASE K"/>
    <property type="match status" value="1"/>
</dbReference>
<dbReference type="Pfam" id="PF01348">
    <property type="entry name" value="Intron_maturas2"/>
    <property type="match status" value="1"/>
</dbReference>
<dbReference type="Pfam" id="PF01824">
    <property type="entry name" value="MatK_N"/>
    <property type="match status" value="1"/>
</dbReference>
<accession>Q5YK50</accession>
<feature type="chain" id="PRO_0000143319" description="Maturase K">
    <location>
        <begin position="1"/>
        <end position="499"/>
    </location>
</feature>
<evidence type="ECO:0000255" key="1">
    <source>
        <dbReference type="HAMAP-Rule" id="MF_01390"/>
    </source>
</evidence>
<name>MATK_CERSL</name>
<gene>
    <name evidence="1" type="primary">matK</name>
</gene>
<proteinExistence type="inferred from homology"/>
<comment type="function">
    <text evidence="1">Usually encoded in the trnK tRNA gene intron. Probably assists in splicing its own and other chloroplast group II introns.</text>
</comment>
<comment type="subcellular location">
    <subcellularLocation>
        <location>Plastid</location>
        <location>Chloroplast</location>
    </subcellularLocation>
</comment>
<comment type="similarity">
    <text evidence="1">Belongs to the intron maturase 2 family. MatK subfamily.</text>
</comment>